<keyword id="KW-0131">Cell cycle</keyword>
<keyword id="KW-0132">Cell division</keyword>
<keyword id="KW-1003">Cell membrane</keyword>
<keyword id="KW-0133">Cell shape</keyword>
<keyword id="KW-0961">Cell wall biogenesis/degradation</keyword>
<keyword id="KW-0328">Glycosyltransferase</keyword>
<keyword id="KW-0472">Membrane</keyword>
<keyword id="KW-0573">Peptidoglycan synthesis</keyword>
<keyword id="KW-1185">Reference proteome</keyword>
<keyword id="KW-0808">Transferase</keyword>
<feature type="chain" id="PRO_1000192143" description="UDP-N-acetylglucosamine--N-acetylmuramyl-(pentapeptide) pyrophosphoryl-undecaprenol N-acetylglucosamine transferase">
    <location>
        <begin position="1"/>
        <end position="362"/>
    </location>
</feature>
<feature type="binding site" evidence="1">
    <location>
        <position position="166"/>
    </location>
    <ligand>
        <name>UDP-N-acetyl-alpha-D-glucosamine</name>
        <dbReference type="ChEBI" id="CHEBI:57705"/>
    </ligand>
</feature>
<feature type="binding site" evidence="1">
    <location>
        <position position="196"/>
    </location>
    <ligand>
        <name>UDP-N-acetyl-alpha-D-glucosamine</name>
        <dbReference type="ChEBI" id="CHEBI:57705"/>
    </ligand>
</feature>
<feature type="binding site" evidence="1">
    <location>
        <position position="290"/>
    </location>
    <ligand>
        <name>UDP-N-acetyl-alpha-D-glucosamine</name>
        <dbReference type="ChEBI" id="CHEBI:57705"/>
    </ligand>
</feature>
<evidence type="ECO:0000255" key="1">
    <source>
        <dbReference type="HAMAP-Rule" id="MF_00033"/>
    </source>
</evidence>
<gene>
    <name evidence="1" type="primary">murG</name>
    <name type="ordered locus">Sca_1062</name>
</gene>
<comment type="function">
    <text evidence="1">Cell wall formation. Catalyzes the transfer of a GlcNAc subunit on undecaprenyl-pyrophosphoryl-MurNAc-pentapeptide (lipid intermediate I) to form undecaprenyl-pyrophosphoryl-MurNAc-(pentapeptide)GlcNAc (lipid intermediate II).</text>
</comment>
<comment type="catalytic activity">
    <reaction evidence="1">
        <text>Mur2Ac(oyl-L-Ala-gamma-D-Glu-L-Lys-D-Ala-D-Ala)-di-trans,octa-cis-undecaprenyl diphosphate + UDP-N-acetyl-alpha-D-glucosamine = beta-D-GlcNAc-(1-&gt;4)-Mur2Ac(oyl-L-Ala-gamma-D-Glu-L-Lys-D-Ala-D-Ala)-di-trans,octa-cis-undecaprenyl diphosphate + UDP + H(+)</text>
        <dbReference type="Rhea" id="RHEA:23192"/>
        <dbReference type="ChEBI" id="CHEBI:15378"/>
        <dbReference type="ChEBI" id="CHEBI:57705"/>
        <dbReference type="ChEBI" id="CHEBI:58223"/>
        <dbReference type="ChEBI" id="CHEBI:60032"/>
        <dbReference type="ChEBI" id="CHEBI:60033"/>
        <dbReference type="EC" id="2.4.1.227"/>
    </reaction>
</comment>
<comment type="pathway">
    <text evidence="1">Cell wall biogenesis; peptidoglycan biosynthesis.</text>
</comment>
<comment type="subcellular location">
    <subcellularLocation>
        <location evidence="1">Cell membrane</location>
        <topology evidence="1">Peripheral membrane protein</topology>
        <orientation evidence="1">Cytoplasmic side</orientation>
    </subcellularLocation>
</comment>
<comment type="similarity">
    <text evidence="1">Belongs to the glycosyltransferase 28 family. MurG subfamily.</text>
</comment>
<dbReference type="EC" id="2.4.1.227" evidence="1"/>
<dbReference type="EMBL" id="AM295250">
    <property type="protein sequence ID" value="CAL27970.1"/>
    <property type="molecule type" value="Genomic_DNA"/>
</dbReference>
<dbReference type="RefSeq" id="WP_015900311.1">
    <property type="nucleotide sequence ID" value="NC_012121.1"/>
</dbReference>
<dbReference type="SMR" id="B9DNZ7"/>
<dbReference type="CAZy" id="GT28">
    <property type="family name" value="Glycosyltransferase Family 28"/>
</dbReference>
<dbReference type="GeneID" id="93793486"/>
<dbReference type="KEGG" id="sca:SCA_1062"/>
<dbReference type="eggNOG" id="COG0707">
    <property type="taxonomic scope" value="Bacteria"/>
</dbReference>
<dbReference type="HOGENOM" id="CLU_037404_0_0_9"/>
<dbReference type="OrthoDB" id="9808936at2"/>
<dbReference type="BioCyc" id="SCAR396513:SCA_RS05320-MONOMER"/>
<dbReference type="UniPathway" id="UPA00219"/>
<dbReference type="Proteomes" id="UP000000444">
    <property type="component" value="Chromosome"/>
</dbReference>
<dbReference type="GO" id="GO:0005886">
    <property type="term" value="C:plasma membrane"/>
    <property type="evidence" value="ECO:0007669"/>
    <property type="project" value="UniProtKB-SubCell"/>
</dbReference>
<dbReference type="GO" id="GO:0050511">
    <property type="term" value="F:undecaprenyldiphospho-muramoylpentapeptide beta-N-acetylglucosaminyltransferase activity"/>
    <property type="evidence" value="ECO:0007669"/>
    <property type="project" value="UniProtKB-UniRule"/>
</dbReference>
<dbReference type="GO" id="GO:0005975">
    <property type="term" value="P:carbohydrate metabolic process"/>
    <property type="evidence" value="ECO:0007669"/>
    <property type="project" value="InterPro"/>
</dbReference>
<dbReference type="GO" id="GO:0051301">
    <property type="term" value="P:cell division"/>
    <property type="evidence" value="ECO:0007669"/>
    <property type="project" value="UniProtKB-KW"/>
</dbReference>
<dbReference type="GO" id="GO:0071555">
    <property type="term" value="P:cell wall organization"/>
    <property type="evidence" value="ECO:0007669"/>
    <property type="project" value="UniProtKB-KW"/>
</dbReference>
<dbReference type="GO" id="GO:0030259">
    <property type="term" value="P:lipid glycosylation"/>
    <property type="evidence" value="ECO:0007669"/>
    <property type="project" value="UniProtKB-UniRule"/>
</dbReference>
<dbReference type="GO" id="GO:0009252">
    <property type="term" value="P:peptidoglycan biosynthetic process"/>
    <property type="evidence" value="ECO:0007669"/>
    <property type="project" value="UniProtKB-UniRule"/>
</dbReference>
<dbReference type="GO" id="GO:0008360">
    <property type="term" value="P:regulation of cell shape"/>
    <property type="evidence" value="ECO:0007669"/>
    <property type="project" value="UniProtKB-KW"/>
</dbReference>
<dbReference type="CDD" id="cd03785">
    <property type="entry name" value="GT28_MurG"/>
    <property type="match status" value="1"/>
</dbReference>
<dbReference type="Gene3D" id="3.40.50.2000">
    <property type="entry name" value="Glycogen Phosphorylase B"/>
    <property type="match status" value="2"/>
</dbReference>
<dbReference type="HAMAP" id="MF_00033">
    <property type="entry name" value="MurG"/>
    <property type="match status" value="1"/>
</dbReference>
<dbReference type="InterPro" id="IPR006009">
    <property type="entry name" value="GlcNAc_MurG"/>
</dbReference>
<dbReference type="InterPro" id="IPR007235">
    <property type="entry name" value="Glyco_trans_28_C"/>
</dbReference>
<dbReference type="InterPro" id="IPR004276">
    <property type="entry name" value="GlycoTrans_28_N"/>
</dbReference>
<dbReference type="NCBIfam" id="NF009102">
    <property type="entry name" value="PRK12446.1"/>
    <property type="match status" value="1"/>
</dbReference>
<dbReference type="PANTHER" id="PTHR21015:SF27">
    <property type="entry name" value="UDP-N-ACETYLGLUCOSAMINE--N-ACETYLMURAMYL-(PENTAPEPTIDE) PYROPHOSPHORYL-UNDECAPRENOL N-ACETYLGLUCOSAMINE TRANSFERASE"/>
    <property type="match status" value="1"/>
</dbReference>
<dbReference type="PANTHER" id="PTHR21015">
    <property type="entry name" value="UDP-N-ACETYLGLUCOSAMINE--N-ACETYLMURAMYL-(PENTAPEPTIDE) PYROPHOSPHORYL-UNDECAPRENOL N-ACETYLGLUCOSAMINE TRANSFERASE 1"/>
    <property type="match status" value="1"/>
</dbReference>
<dbReference type="Pfam" id="PF04101">
    <property type="entry name" value="Glyco_tran_28_C"/>
    <property type="match status" value="1"/>
</dbReference>
<dbReference type="Pfam" id="PF03033">
    <property type="entry name" value="Glyco_transf_28"/>
    <property type="match status" value="1"/>
</dbReference>
<dbReference type="SUPFAM" id="SSF53756">
    <property type="entry name" value="UDP-Glycosyltransferase/glycogen phosphorylase"/>
    <property type="match status" value="1"/>
</dbReference>
<reference key="1">
    <citation type="journal article" date="2009" name="Appl. Environ. Microbiol.">
        <title>Genome analysis of the meat starter culture bacterium Staphylococcus carnosus TM300.</title>
        <authorList>
            <person name="Rosenstein R."/>
            <person name="Nerz C."/>
            <person name="Biswas L."/>
            <person name="Resch A."/>
            <person name="Raddatz G."/>
            <person name="Schuster S.C."/>
            <person name="Goetz F."/>
        </authorList>
    </citation>
    <scope>NUCLEOTIDE SEQUENCE [LARGE SCALE GENOMIC DNA]</scope>
    <source>
        <strain>TM300</strain>
    </source>
</reference>
<name>MURG_STACT</name>
<accession>B9DNZ7</accession>
<protein>
    <recommendedName>
        <fullName evidence="1">UDP-N-acetylglucosamine--N-acetylmuramyl-(pentapeptide) pyrophosphoryl-undecaprenol N-acetylglucosamine transferase</fullName>
        <ecNumber evidence="1">2.4.1.227</ecNumber>
    </recommendedName>
    <alternativeName>
        <fullName evidence="1">Undecaprenyl-PP-MurNAc-pentapeptide-UDPGlcNAc GlcNAc transferase</fullName>
    </alternativeName>
</protein>
<organism>
    <name type="scientific">Staphylococcus carnosus (strain TM300)</name>
    <dbReference type="NCBI Taxonomy" id="396513"/>
    <lineage>
        <taxon>Bacteria</taxon>
        <taxon>Bacillati</taxon>
        <taxon>Bacillota</taxon>
        <taxon>Bacilli</taxon>
        <taxon>Bacillales</taxon>
        <taxon>Staphylococcaceae</taxon>
        <taxon>Staphylococcus</taxon>
    </lineage>
</organism>
<proteinExistence type="inferred from homology"/>
<sequence length="362" mass="40676">MTKIAFTGGGTVGHVSVNLSLIPIAQERGYEAFYVGSKNGIEREMIESQLPGIQYFPISSGKLRRYISVENIKDVFKVLKGVLDARKVLKKQKPDLLFSKGGFVSVPVVIAARSLNIPVVIHESDITPGLANKISLKFAKKIYTTFEDTLKYLPKEKADFVGATVRDDLKEGNRTNGFQLTGFNDDKKVLLVMGGSLGSKKINELIRQNLDTLLKEYQIIHLTGRGLLDETIQREGYKQFEFVTDELTDLLAITDTVVSRAGANAIYEFLTLNIPMLLIPLGLDQSRGDQIDNAKNFQNKGYAETLPEDQANTTNFIESLHKIESNRSDIEKQMHEYHQLFTKEDLLDKILKDTNQKETRES</sequence>